<gene>
    <name evidence="1" type="primary">thiQ</name>
    <name type="ordered locus">NTHI1187</name>
</gene>
<sequence length="215" mass="23740">MIYLNNVILNDKTLPMCFNLNVKAGERVAIIGESGAGKSTLLNLIAGFEFPAQGEIWLNDKNHTRSAPYERPVSMLFQENNLFPHLTVQQNLALGIKPSLKLTALEQEKIEQAACSVGLGDYLERLPNSLSGGQKQRVALARCLLRDKPILLLDEPFSALDQKLRVEMLALIAKLCDEKDLTLLLVTHQPSELIGSIDQVLVVENGQISQLQKGV</sequence>
<organism>
    <name type="scientific">Haemophilus influenzae (strain 86-028NP)</name>
    <dbReference type="NCBI Taxonomy" id="281310"/>
    <lineage>
        <taxon>Bacteria</taxon>
        <taxon>Pseudomonadati</taxon>
        <taxon>Pseudomonadota</taxon>
        <taxon>Gammaproteobacteria</taxon>
        <taxon>Pasteurellales</taxon>
        <taxon>Pasteurellaceae</taxon>
        <taxon>Haemophilus</taxon>
    </lineage>
</organism>
<accession>Q4QLQ1</accession>
<feature type="chain" id="PRO_0000274443" description="Thiamine import ATP-binding protein ThiQ">
    <location>
        <begin position="1"/>
        <end position="215"/>
    </location>
</feature>
<feature type="domain" description="ABC transporter" evidence="1">
    <location>
        <begin position="2"/>
        <end position="215"/>
    </location>
</feature>
<feature type="binding site" evidence="1">
    <location>
        <begin position="32"/>
        <end position="39"/>
    </location>
    <ligand>
        <name>ATP</name>
        <dbReference type="ChEBI" id="CHEBI:30616"/>
    </ligand>
</feature>
<dbReference type="EC" id="7.6.2.15" evidence="1"/>
<dbReference type="EMBL" id="CP000057">
    <property type="protein sequence ID" value="AAX88046.1"/>
    <property type="status" value="ALT_INIT"/>
    <property type="molecule type" value="Genomic_DNA"/>
</dbReference>
<dbReference type="RefSeq" id="WP_038441405.1">
    <property type="nucleotide sequence ID" value="NC_007146.2"/>
</dbReference>
<dbReference type="SMR" id="Q4QLQ1"/>
<dbReference type="GeneID" id="93220045"/>
<dbReference type="KEGG" id="hit:NTHI1187"/>
<dbReference type="HOGENOM" id="CLU_000604_1_22_6"/>
<dbReference type="Proteomes" id="UP000002525">
    <property type="component" value="Chromosome"/>
</dbReference>
<dbReference type="GO" id="GO:0005886">
    <property type="term" value="C:plasma membrane"/>
    <property type="evidence" value="ECO:0007669"/>
    <property type="project" value="UniProtKB-SubCell"/>
</dbReference>
<dbReference type="GO" id="GO:0048502">
    <property type="term" value="F:ABC-type thiamine transporter activity"/>
    <property type="evidence" value="ECO:0007669"/>
    <property type="project" value="UniProtKB-EC"/>
</dbReference>
<dbReference type="GO" id="GO:0005524">
    <property type="term" value="F:ATP binding"/>
    <property type="evidence" value="ECO:0007669"/>
    <property type="project" value="UniProtKB-KW"/>
</dbReference>
<dbReference type="GO" id="GO:0016887">
    <property type="term" value="F:ATP hydrolysis activity"/>
    <property type="evidence" value="ECO:0007669"/>
    <property type="project" value="InterPro"/>
</dbReference>
<dbReference type="Gene3D" id="3.40.50.300">
    <property type="entry name" value="P-loop containing nucleotide triphosphate hydrolases"/>
    <property type="match status" value="1"/>
</dbReference>
<dbReference type="InterPro" id="IPR003593">
    <property type="entry name" value="AAA+_ATPase"/>
</dbReference>
<dbReference type="InterPro" id="IPR050093">
    <property type="entry name" value="ABC_SmlMolc_Importer"/>
</dbReference>
<dbReference type="InterPro" id="IPR003439">
    <property type="entry name" value="ABC_transporter-like_ATP-bd"/>
</dbReference>
<dbReference type="InterPro" id="IPR017871">
    <property type="entry name" value="ABC_transporter-like_CS"/>
</dbReference>
<dbReference type="InterPro" id="IPR027417">
    <property type="entry name" value="P-loop_NTPase"/>
</dbReference>
<dbReference type="InterPro" id="IPR005968">
    <property type="entry name" value="Thiamine_ABC_ThiQ"/>
</dbReference>
<dbReference type="NCBIfam" id="TIGR01277">
    <property type="entry name" value="thiQ"/>
    <property type="match status" value="1"/>
</dbReference>
<dbReference type="PANTHER" id="PTHR42781">
    <property type="entry name" value="SPERMIDINE/PUTRESCINE IMPORT ATP-BINDING PROTEIN POTA"/>
    <property type="match status" value="1"/>
</dbReference>
<dbReference type="PANTHER" id="PTHR42781:SF1">
    <property type="entry name" value="THIAMINE IMPORT ATP-BINDING PROTEIN THIQ"/>
    <property type="match status" value="1"/>
</dbReference>
<dbReference type="Pfam" id="PF00005">
    <property type="entry name" value="ABC_tran"/>
    <property type="match status" value="1"/>
</dbReference>
<dbReference type="SMART" id="SM00382">
    <property type="entry name" value="AAA"/>
    <property type="match status" value="1"/>
</dbReference>
<dbReference type="SUPFAM" id="SSF52540">
    <property type="entry name" value="P-loop containing nucleoside triphosphate hydrolases"/>
    <property type="match status" value="1"/>
</dbReference>
<dbReference type="PROSITE" id="PS00211">
    <property type="entry name" value="ABC_TRANSPORTER_1"/>
    <property type="match status" value="1"/>
</dbReference>
<dbReference type="PROSITE" id="PS50893">
    <property type="entry name" value="ABC_TRANSPORTER_2"/>
    <property type="match status" value="1"/>
</dbReference>
<dbReference type="PROSITE" id="PS51288">
    <property type="entry name" value="THIQ"/>
    <property type="match status" value="1"/>
</dbReference>
<reference key="1">
    <citation type="journal article" date="2005" name="J. Bacteriol.">
        <title>Genomic sequence of an otitis media isolate of nontypeable Haemophilus influenzae: comparative study with H. influenzae serotype d, strain KW20.</title>
        <authorList>
            <person name="Harrison A."/>
            <person name="Dyer D.W."/>
            <person name="Gillaspy A."/>
            <person name="Ray W.C."/>
            <person name="Mungur R."/>
            <person name="Carson M.B."/>
            <person name="Zhong H."/>
            <person name="Gipson J."/>
            <person name="Gipson M."/>
            <person name="Johnson L.S."/>
            <person name="Lewis L."/>
            <person name="Bakaletz L.O."/>
            <person name="Munson R.S. Jr."/>
        </authorList>
    </citation>
    <scope>NUCLEOTIDE SEQUENCE [LARGE SCALE GENOMIC DNA]</scope>
    <source>
        <strain>86-028NP</strain>
    </source>
</reference>
<protein>
    <recommendedName>
        <fullName evidence="1">Thiamine import ATP-binding protein ThiQ</fullName>
        <ecNumber evidence="1">7.6.2.15</ecNumber>
    </recommendedName>
</protein>
<keyword id="KW-0067">ATP-binding</keyword>
<keyword id="KW-0997">Cell inner membrane</keyword>
<keyword id="KW-1003">Cell membrane</keyword>
<keyword id="KW-0472">Membrane</keyword>
<keyword id="KW-0547">Nucleotide-binding</keyword>
<keyword id="KW-1278">Translocase</keyword>
<keyword id="KW-0813">Transport</keyword>
<evidence type="ECO:0000255" key="1">
    <source>
        <dbReference type="HAMAP-Rule" id="MF_01723"/>
    </source>
</evidence>
<evidence type="ECO:0000305" key="2"/>
<name>THIQ_HAEI8</name>
<proteinExistence type="inferred from homology"/>
<comment type="function">
    <text evidence="1">Part of the ABC transporter complex ThiBPQ involved in thiamine import. Responsible for energy coupling to the transport system.</text>
</comment>
<comment type="catalytic activity">
    <reaction evidence="1">
        <text>thiamine(out) + ATP + H2O = thiamine(in) + ADP + phosphate + H(+)</text>
        <dbReference type="Rhea" id="RHEA:29811"/>
        <dbReference type="ChEBI" id="CHEBI:15377"/>
        <dbReference type="ChEBI" id="CHEBI:15378"/>
        <dbReference type="ChEBI" id="CHEBI:18385"/>
        <dbReference type="ChEBI" id="CHEBI:30616"/>
        <dbReference type="ChEBI" id="CHEBI:43474"/>
        <dbReference type="ChEBI" id="CHEBI:456216"/>
        <dbReference type="EC" id="7.6.2.15"/>
    </reaction>
</comment>
<comment type="subunit">
    <text evidence="1">The complex is composed of two ATP-binding proteins (ThiQ), two transmembrane proteins (ThiP) and a solute-binding protein (ThiB).</text>
</comment>
<comment type="subcellular location">
    <subcellularLocation>
        <location evidence="1">Cell inner membrane</location>
        <topology evidence="1">Peripheral membrane protein</topology>
    </subcellularLocation>
</comment>
<comment type="similarity">
    <text evidence="1">Belongs to the ABC transporter superfamily. Thiamine importer (TC 3.A.1.19.1) family.</text>
</comment>
<comment type="sequence caution" evidence="2">
    <conflict type="erroneous initiation">
        <sequence resource="EMBL-CDS" id="AAX88046"/>
    </conflict>
</comment>